<sequence>MNLSKIKIGDIPNKINAVIEIPYGSNIKYEIDKDSGAIMVDRVMASAIFYPANYGFIANTLADDGDPVDILVLNEYPIQAGAVIPCRLIGVLIMEDESGMDEKLLAVPNSKIDARYDNIKTYTDLPQATLNKIKNFFETYKILEPNKWVKVQDFKDEKAAIEILEKAIKNYK</sequence>
<organism>
    <name type="scientific">Campylobacter jejuni subsp. jejuni serotype O:2 (strain ATCC 700819 / NCTC 11168)</name>
    <dbReference type="NCBI Taxonomy" id="192222"/>
    <lineage>
        <taxon>Bacteria</taxon>
        <taxon>Pseudomonadati</taxon>
        <taxon>Campylobacterota</taxon>
        <taxon>Epsilonproteobacteria</taxon>
        <taxon>Campylobacterales</taxon>
        <taxon>Campylobacteraceae</taxon>
        <taxon>Campylobacter</taxon>
    </lineage>
</organism>
<name>IPYR_CAMJE</name>
<evidence type="ECO:0000255" key="1">
    <source>
        <dbReference type="HAMAP-Rule" id="MF_00209"/>
    </source>
</evidence>
<reference key="1">
    <citation type="journal article" date="2000" name="Nature">
        <title>The genome sequence of the food-borne pathogen Campylobacter jejuni reveals hypervariable sequences.</title>
        <authorList>
            <person name="Parkhill J."/>
            <person name="Wren B.W."/>
            <person name="Mungall K.L."/>
            <person name="Ketley J.M."/>
            <person name="Churcher C.M."/>
            <person name="Basham D."/>
            <person name="Chillingworth T."/>
            <person name="Davies R.M."/>
            <person name="Feltwell T."/>
            <person name="Holroyd S."/>
            <person name="Jagels K."/>
            <person name="Karlyshev A.V."/>
            <person name="Moule S."/>
            <person name="Pallen M.J."/>
            <person name="Penn C.W."/>
            <person name="Quail M.A."/>
            <person name="Rajandream M.A."/>
            <person name="Rutherford K.M."/>
            <person name="van Vliet A.H.M."/>
            <person name="Whitehead S."/>
            <person name="Barrell B.G."/>
        </authorList>
    </citation>
    <scope>NUCLEOTIDE SEQUENCE [LARGE SCALE GENOMIC DNA]</scope>
    <source>
        <strain>ATCC 700819 / NCTC 11168</strain>
    </source>
</reference>
<accession>Q9PHM9</accession>
<accession>Q0PAN0</accession>
<comment type="function">
    <text evidence="1">Catalyzes the hydrolysis of inorganic pyrophosphate (PPi) forming two phosphate ions.</text>
</comment>
<comment type="catalytic activity">
    <reaction evidence="1">
        <text>diphosphate + H2O = 2 phosphate + H(+)</text>
        <dbReference type="Rhea" id="RHEA:24576"/>
        <dbReference type="ChEBI" id="CHEBI:15377"/>
        <dbReference type="ChEBI" id="CHEBI:15378"/>
        <dbReference type="ChEBI" id="CHEBI:33019"/>
        <dbReference type="ChEBI" id="CHEBI:43474"/>
        <dbReference type="EC" id="3.6.1.1"/>
    </reaction>
</comment>
<comment type="cofactor">
    <cofactor evidence="1">
        <name>Mg(2+)</name>
        <dbReference type="ChEBI" id="CHEBI:18420"/>
    </cofactor>
</comment>
<comment type="subunit">
    <text evidence="1">Homohexamer.</text>
</comment>
<comment type="subcellular location">
    <subcellularLocation>
        <location evidence="1">Cytoplasm</location>
    </subcellularLocation>
</comment>
<comment type="similarity">
    <text evidence="1">Belongs to the PPase family.</text>
</comment>
<feature type="chain" id="PRO_0000137487" description="Inorganic pyrophosphatase">
    <location>
        <begin position="1"/>
        <end position="172"/>
    </location>
</feature>
<feature type="binding site" evidence="1">
    <location>
        <position position="28"/>
    </location>
    <ligand>
        <name>substrate</name>
    </ligand>
</feature>
<feature type="binding site" evidence="1">
    <location>
        <position position="42"/>
    </location>
    <ligand>
        <name>substrate</name>
    </ligand>
</feature>
<feature type="binding site" evidence="1">
    <location>
        <position position="54"/>
    </location>
    <ligand>
        <name>substrate</name>
    </ligand>
</feature>
<feature type="binding site" evidence="1">
    <location>
        <position position="64"/>
    </location>
    <ligand>
        <name>Mg(2+)</name>
        <dbReference type="ChEBI" id="CHEBI:18420"/>
        <label>1</label>
    </ligand>
</feature>
<feature type="binding site" evidence="1">
    <location>
        <position position="69"/>
    </location>
    <ligand>
        <name>Mg(2+)</name>
        <dbReference type="ChEBI" id="CHEBI:18420"/>
        <label>1</label>
    </ligand>
</feature>
<feature type="binding site" evidence="1">
    <location>
        <position position="69"/>
    </location>
    <ligand>
        <name>Mg(2+)</name>
        <dbReference type="ChEBI" id="CHEBI:18420"/>
        <label>2</label>
    </ligand>
</feature>
<feature type="binding site" evidence="1">
    <location>
        <position position="101"/>
    </location>
    <ligand>
        <name>Mg(2+)</name>
        <dbReference type="ChEBI" id="CHEBI:18420"/>
        <label>1</label>
    </ligand>
</feature>
<feature type="binding site" evidence="1">
    <location>
        <position position="140"/>
    </location>
    <ligand>
        <name>substrate</name>
    </ligand>
</feature>
<proteinExistence type="inferred from homology"/>
<protein>
    <recommendedName>
        <fullName evidence="1">Inorganic pyrophosphatase</fullName>
        <ecNumber evidence="1">3.6.1.1</ecNumber>
    </recommendedName>
    <alternativeName>
        <fullName evidence="1">Pyrophosphate phospho-hydrolase</fullName>
        <shortName evidence="1">PPase</shortName>
    </alternativeName>
</protein>
<gene>
    <name evidence="1" type="primary">ppa</name>
    <name type="ordered locus">Cj0638c</name>
</gene>
<dbReference type="EC" id="3.6.1.1" evidence="1"/>
<dbReference type="EMBL" id="AL111168">
    <property type="protein sequence ID" value="CAL34783.1"/>
    <property type="molecule type" value="Genomic_DNA"/>
</dbReference>
<dbReference type="PIR" id="E81412">
    <property type="entry name" value="E81412"/>
</dbReference>
<dbReference type="RefSeq" id="WP_002858521.1">
    <property type="nucleotide sequence ID" value="NZ_SZUC01000002.1"/>
</dbReference>
<dbReference type="RefSeq" id="YP_002344067.1">
    <property type="nucleotide sequence ID" value="NC_002163.1"/>
</dbReference>
<dbReference type="SMR" id="Q9PHM9"/>
<dbReference type="STRING" id="192222.Cj0638c"/>
<dbReference type="PaxDb" id="192222-Cj0638c"/>
<dbReference type="EnsemblBacteria" id="CAL34783">
    <property type="protein sequence ID" value="CAL34783"/>
    <property type="gene ID" value="Cj0638c"/>
</dbReference>
<dbReference type="GeneID" id="904968"/>
<dbReference type="KEGG" id="cje:Cj0638c"/>
<dbReference type="PATRIC" id="fig|192222.6.peg.630"/>
<dbReference type="eggNOG" id="COG0221">
    <property type="taxonomic scope" value="Bacteria"/>
</dbReference>
<dbReference type="HOGENOM" id="CLU_073198_1_0_7"/>
<dbReference type="OrthoDB" id="5187599at2"/>
<dbReference type="Proteomes" id="UP000000799">
    <property type="component" value="Chromosome"/>
</dbReference>
<dbReference type="GO" id="GO:0005737">
    <property type="term" value="C:cytoplasm"/>
    <property type="evidence" value="ECO:0007669"/>
    <property type="project" value="UniProtKB-SubCell"/>
</dbReference>
<dbReference type="GO" id="GO:0004427">
    <property type="term" value="F:inorganic diphosphate phosphatase activity"/>
    <property type="evidence" value="ECO:0007669"/>
    <property type="project" value="UniProtKB-UniRule"/>
</dbReference>
<dbReference type="GO" id="GO:0000287">
    <property type="term" value="F:magnesium ion binding"/>
    <property type="evidence" value="ECO:0007669"/>
    <property type="project" value="UniProtKB-UniRule"/>
</dbReference>
<dbReference type="GO" id="GO:0006796">
    <property type="term" value="P:phosphate-containing compound metabolic process"/>
    <property type="evidence" value="ECO:0007669"/>
    <property type="project" value="InterPro"/>
</dbReference>
<dbReference type="CDD" id="cd00412">
    <property type="entry name" value="pyrophosphatase"/>
    <property type="match status" value="1"/>
</dbReference>
<dbReference type="FunFam" id="3.90.80.10:FF:000003">
    <property type="entry name" value="Inorganic pyrophosphatase"/>
    <property type="match status" value="1"/>
</dbReference>
<dbReference type="Gene3D" id="3.90.80.10">
    <property type="entry name" value="Inorganic pyrophosphatase"/>
    <property type="match status" value="1"/>
</dbReference>
<dbReference type="HAMAP" id="MF_00209">
    <property type="entry name" value="Inorganic_PPase"/>
    <property type="match status" value="1"/>
</dbReference>
<dbReference type="InterPro" id="IPR008162">
    <property type="entry name" value="Pyrophosphatase"/>
</dbReference>
<dbReference type="InterPro" id="IPR036649">
    <property type="entry name" value="Pyrophosphatase_sf"/>
</dbReference>
<dbReference type="NCBIfam" id="NF002317">
    <property type="entry name" value="PRK01250.1"/>
    <property type="match status" value="1"/>
</dbReference>
<dbReference type="PANTHER" id="PTHR10286">
    <property type="entry name" value="INORGANIC PYROPHOSPHATASE"/>
    <property type="match status" value="1"/>
</dbReference>
<dbReference type="Pfam" id="PF00719">
    <property type="entry name" value="Pyrophosphatase"/>
    <property type="match status" value="1"/>
</dbReference>
<dbReference type="SUPFAM" id="SSF50324">
    <property type="entry name" value="Inorganic pyrophosphatase"/>
    <property type="match status" value="1"/>
</dbReference>
<dbReference type="PROSITE" id="PS00387">
    <property type="entry name" value="PPASE"/>
    <property type="match status" value="1"/>
</dbReference>
<keyword id="KW-0963">Cytoplasm</keyword>
<keyword id="KW-0378">Hydrolase</keyword>
<keyword id="KW-0460">Magnesium</keyword>
<keyword id="KW-0479">Metal-binding</keyword>
<keyword id="KW-1185">Reference proteome</keyword>